<reference key="1">
    <citation type="journal article" date="2002" name="Genome Res.">
        <title>The genome of Methanosarcina acetivorans reveals extensive metabolic and physiological diversity.</title>
        <authorList>
            <person name="Galagan J.E."/>
            <person name="Nusbaum C."/>
            <person name="Roy A."/>
            <person name="Endrizzi M.G."/>
            <person name="Macdonald P."/>
            <person name="FitzHugh W."/>
            <person name="Calvo S."/>
            <person name="Engels R."/>
            <person name="Smirnov S."/>
            <person name="Atnoor D."/>
            <person name="Brown A."/>
            <person name="Allen N."/>
            <person name="Naylor J."/>
            <person name="Stange-Thomann N."/>
            <person name="DeArellano K."/>
            <person name="Johnson R."/>
            <person name="Linton L."/>
            <person name="McEwan P."/>
            <person name="McKernan K."/>
            <person name="Talamas J."/>
            <person name="Tirrell A."/>
            <person name="Ye W."/>
            <person name="Zimmer A."/>
            <person name="Barber R.D."/>
            <person name="Cann I."/>
            <person name="Graham D.E."/>
            <person name="Grahame D.A."/>
            <person name="Guss A.M."/>
            <person name="Hedderich R."/>
            <person name="Ingram-Smith C."/>
            <person name="Kuettner H.C."/>
            <person name="Krzycki J.A."/>
            <person name="Leigh J.A."/>
            <person name="Li W."/>
            <person name="Liu J."/>
            <person name="Mukhopadhyay B."/>
            <person name="Reeve J.N."/>
            <person name="Smith K."/>
            <person name="Springer T.A."/>
            <person name="Umayam L.A."/>
            <person name="White O."/>
            <person name="White R.H."/>
            <person name="de Macario E.C."/>
            <person name="Ferry J.G."/>
            <person name="Jarrell K.F."/>
            <person name="Jing H."/>
            <person name="Macario A.J.L."/>
            <person name="Paulsen I.T."/>
            <person name="Pritchett M."/>
            <person name="Sowers K.R."/>
            <person name="Swanson R.V."/>
            <person name="Zinder S.H."/>
            <person name="Lander E."/>
            <person name="Metcalf W.W."/>
            <person name="Birren B."/>
        </authorList>
    </citation>
    <scope>NUCLEOTIDE SEQUENCE [LARGE SCALE GENOMIC DNA]</scope>
    <source>
        <strain evidence="6">ATCC 35395 / DSM 2834 / JCM 12185 / C2A</strain>
    </source>
</reference>
<reference key="2">
    <citation type="journal article" date="2016" name="Science">
        <title>The biosynthetic pathway of coenzyme F430 in methanogenic and methanotrophic archaea.</title>
        <authorList>
            <person name="Zheng K."/>
            <person name="Ngo P.D."/>
            <person name="Owens V.L."/>
            <person name="Yang X.P."/>
            <person name="Mansoorabadi S.O."/>
        </authorList>
    </citation>
    <scope>FUNCTION</scope>
    <scope>CATALYTIC ACTIVITY</scope>
    <scope>SUBUNIT</scope>
    <source>
        <strain>ATCC 35395 / DSM 2834 / JCM 12185 / C2A</strain>
    </source>
</reference>
<protein>
    <recommendedName>
        <fullName evidence="3">Ni-sirohydrochlorin a,c-diamide reductive cyclase complex, component CfbD</fullName>
        <ecNumber evidence="2">6.3.3.7</ecNumber>
    </recommendedName>
    <alternativeName>
        <fullName evidence="3">NifD homolog component CfbD</fullName>
    </alternativeName>
</protein>
<name>CFBD_METAC</name>
<proteinExistence type="evidence at protein level"/>
<comment type="function">
    <text evidence="2">Involved in the biosynthesis of the unique nickel-containing tetrapyrrole coenzyme F430, the prosthetic group of methyl-coenzyme M reductase (MCR), which plays a key role in methanogenesis and anaerobic methane oxidation. Catalyzes both the six-electron reduction of the tetrahydroporphyrin ring system and the gamma-lactamization of the c-acetamide side chain of Ni-sirohydrochlorin a,c-diamide to yield 15,17(3)-seco-F430-17(3)-acid (seco-F430), the last intermediate in the biosynthesis of the coenzyme F430.</text>
</comment>
<comment type="catalytic activity">
    <reaction evidence="2">
        <text>Ni-sirohydrochlorin a,c-diamide + 3 AH2 + ATP + H2O = 15,17(3)-seco-F430-17(3)-acid + 3 A + ADP + phosphate</text>
        <dbReference type="Rhea" id="RHEA:52900"/>
        <dbReference type="ChEBI" id="CHEBI:13193"/>
        <dbReference type="ChEBI" id="CHEBI:15377"/>
        <dbReference type="ChEBI" id="CHEBI:17499"/>
        <dbReference type="ChEBI" id="CHEBI:30616"/>
        <dbReference type="ChEBI" id="CHEBI:43474"/>
        <dbReference type="ChEBI" id="CHEBI:136887"/>
        <dbReference type="ChEBI" id="CHEBI:136888"/>
        <dbReference type="ChEBI" id="CHEBI:456216"/>
        <dbReference type="EC" id="6.3.3.7"/>
    </reaction>
</comment>
<comment type="cofactor">
    <cofactor evidence="1">
        <name>[4Fe-4S] cluster</name>
        <dbReference type="ChEBI" id="CHEBI:49883"/>
    </cofactor>
</comment>
<comment type="subunit">
    <text evidence="1 2">Homodimer or monomer (By similarity). The Ni-sirohydrochlorin a,c-diamide reductive cyclase complex is composed of a NifH homolog component CfbC and a NifD homolog component CfbD (PubMed:27846569).</text>
</comment>
<comment type="similarity">
    <text evidence="4">Belongs to the NifD/NifK/NifE/NifN family.</text>
</comment>
<organism>
    <name type="scientific">Methanosarcina acetivorans (strain ATCC 35395 / DSM 2834 / JCM 12185 / C2A)</name>
    <dbReference type="NCBI Taxonomy" id="188937"/>
    <lineage>
        <taxon>Archaea</taxon>
        <taxon>Methanobacteriati</taxon>
        <taxon>Methanobacteriota</taxon>
        <taxon>Stenosarchaea group</taxon>
        <taxon>Methanomicrobia</taxon>
        <taxon>Methanosarcinales</taxon>
        <taxon>Methanosarcinaceae</taxon>
        <taxon>Methanosarcina</taxon>
    </lineage>
</organism>
<keyword id="KW-0067">ATP-binding</keyword>
<keyword id="KW-0408">Iron</keyword>
<keyword id="KW-0411">Iron-sulfur</keyword>
<keyword id="KW-0436">Ligase</keyword>
<keyword id="KW-0479">Metal-binding</keyword>
<keyword id="KW-0484">Methanogenesis</keyword>
<keyword id="KW-0547">Nucleotide-binding</keyword>
<keyword id="KW-1185">Reference proteome</keyword>
<dbReference type="EC" id="6.3.3.7" evidence="2"/>
<dbReference type="EMBL" id="AE010299">
    <property type="protein sequence ID" value="AAM06983.1"/>
    <property type="molecule type" value="Genomic_DNA"/>
</dbReference>
<dbReference type="RefSeq" id="WP_011023536.1">
    <property type="nucleotide sequence ID" value="NC_003552.1"/>
</dbReference>
<dbReference type="SMR" id="Q8TJZ8"/>
<dbReference type="FunCoup" id="Q8TJZ8">
    <property type="interactions" value="95"/>
</dbReference>
<dbReference type="STRING" id="188937.MA_3628"/>
<dbReference type="DNASU" id="1475521"/>
<dbReference type="EnsemblBacteria" id="AAM06983">
    <property type="protein sequence ID" value="AAM06983"/>
    <property type="gene ID" value="MA_3628"/>
</dbReference>
<dbReference type="GeneID" id="1475521"/>
<dbReference type="KEGG" id="mac:MA_3628"/>
<dbReference type="HOGENOM" id="CLU_782144_0_0_2"/>
<dbReference type="InParanoid" id="Q8TJZ8"/>
<dbReference type="OrthoDB" id="53142at2157"/>
<dbReference type="PhylomeDB" id="Q8TJZ8"/>
<dbReference type="BioCyc" id="MetaCyc:MONOMER-20116"/>
<dbReference type="Proteomes" id="UP000002487">
    <property type="component" value="Chromosome"/>
</dbReference>
<dbReference type="GO" id="GO:0005524">
    <property type="term" value="F:ATP binding"/>
    <property type="evidence" value="ECO:0007669"/>
    <property type="project" value="UniProtKB-KW"/>
</dbReference>
<dbReference type="GO" id="GO:0051536">
    <property type="term" value="F:iron-sulfur cluster binding"/>
    <property type="evidence" value="ECO:0007669"/>
    <property type="project" value="UniProtKB-KW"/>
</dbReference>
<dbReference type="GO" id="GO:0016874">
    <property type="term" value="F:ligase activity"/>
    <property type="evidence" value="ECO:0007669"/>
    <property type="project" value="UniProtKB-KW"/>
</dbReference>
<dbReference type="GO" id="GO:0046872">
    <property type="term" value="F:metal ion binding"/>
    <property type="evidence" value="ECO:0007669"/>
    <property type="project" value="UniProtKB-KW"/>
</dbReference>
<dbReference type="GO" id="GO:0016491">
    <property type="term" value="F:oxidoreductase activity"/>
    <property type="evidence" value="ECO:0007669"/>
    <property type="project" value="InterPro"/>
</dbReference>
<dbReference type="GO" id="GO:0015948">
    <property type="term" value="P:methanogenesis"/>
    <property type="evidence" value="ECO:0007669"/>
    <property type="project" value="UniProtKB-KW"/>
</dbReference>
<dbReference type="Gene3D" id="3.40.50.1980">
    <property type="entry name" value="Nitrogenase molybdenum iron protein domain"/>
    <property type="match status" value="1"/>
</dbReference>
<dbReference type="InterPro" id="IPR017675">
    <property type="entry name" value="CfbD"/>
</dbReference>
<dbReference type="InterPro" id="IPR000510">
    <property type="entry name" value="Nase/OxRdtase_comp1"/>
</dbReference>
<dbReference type="InterPro" id="IPR052673">
    <property type="entry name" value="Ni-siroh_cyclase_CfbD"/>
</dbReference>
<dbReference type="NCBIfam" id="TIGR03282">
    <property type="entry name" value="methan_mark_13"/>
    <property type="match status" value="1"/>
</dbReference>
<dbReference type="PANTHER" id="PTHR42846">
    <property type="entry name" value="NI-SIROHYDROCHLORIN A,C-DIAMIDE REDUCTIVE CYCLASE COMPLEX, COMPONENT CFBD"/>
    <property type="match status" value="1"/>
</dbReference>
<dbReference type="PANTHER" id="PTHR42846:SF1">
    <property type="entry name" value="NI-SIROHYDROCHLORIN A,C-DIAMIDE REDUCTIVE CYCLASE COMPLEX, COMPONENT CFBD"/>
    <property type="match status" value="1"/>
</dbReference>
<dbReference type="Pfam" id="PF00148">
    <property type="entry name" value="Oxidored_nitro"/>
    <property type="match status" value="1"/>
</dbReference>
<dbReference type="SUPFAM" id="SSF53807">
    <property type="entry name" value="Helical backbone' metal receptor"/>
    <property type="match status" value="1"/>
</dbReference>
<gene>
    <name evidence="3" type="primary">cfbD</name>
    <name type="synonym">nifD</name>
    <name evidence="5" type="ordered locus">MA_3628</name>
</gene>
<accession>Q8TJZ8</accession>
<evidence type="ECO:0000250" key="1">
    <source>
        <dbReference type="UniProtKB" id="Q46FL2"/>
    </source>
</evidence>
<evidence type="ECO:0000269" key="2">
    <source>
    </source>
</evidence>
<evidence type="ECO:0000303" key="3">
    <source>
    </source>
</evidence>
<evidence type="ECO:0000305" key="4"/>
<evidence type="ECO:0000312" key="5">
    <source>
        <dbReference type="EMBL" id="AAM06983.1"/>
    </source>
</evidence>
<evidence type="ECO:0000312" key="6">
    <source>
        <dbReference type="Proteomes" id="UP000002487"/>
    </source>
</evidence>
<sequence>MTQKEISIIHPRPSSIVAALYTLRDLNVDVAILHGPPGCSFKHARLLEEDGIHVVTTGLDENGFVFGGHDRLVEVINKSIELFNPKILGVVGTCASMIIGEEMHDAVLEANPDIPVIEVEVHAGYHNNTRGVLFALESALDAGIIDRKEFERQEYLLIKATEVEKRFGAASKEYLAPSRGDLKYKVAKRLIELLKEGKKGLVIMNAKKETGYMFADITLAVSEVAAALGKKENLVNMANIDPELGLPRVRQHAQYIMRDFIAHGVEIHEIIGGMDEYPIAGEKVSELIKEKYSDYDFAVITGVPHAIPMENLQHMELISITNGPRQVLPLKEMGHEHVLVEIDLHPKTLGVSEIVESEFGATLREVAKEA</sequence>
<feature type="chain" id="PRO_0000442426" description="Ni-sirohydrochlorin a,c-diamide reductive cyclase complex, component CfbD">
    <location>
        <begin position="1"/>
        <end position="370"/>
    </location>
</feature>